<keyword id="KW-0028">Amino-acid biosynthesis</keyword>
<keyword id="KW-0057">Aromatic amino acid biosynthesis</keyword>
<keyword id="KW-0521">NADP</keyword>
<keyword id="KW-0560">Oxidoreductase</keyword>
<comment type="function">
    <text evidence="1">Involved in the biosynthesis of the chorismate, which leads to the biosynthesis of aromatic amino acids. Catalyzes the reversible NADPH linked reduction of 3-dehydroshikimate (DHSA) to yield shikimate (SA).</text>
</comment>
<comment type="catalytic activity">
    <reaction evidence="1">
        <text>shikimate + NADP(+) = 3-dehydroshikimate + NADPH + H(+)</text>
        <dbReference type="Rhea" id="RHEA:17737"/>
        <dbReference type="ChEBI" id="CHEBI:15378"/>
        <dbReference type="ChEBI" id="CHEBI:16630"/>
        <dbReference type="ChEBI" id="CHEBI:36208"/>
        <dbReference type="ChEBI" id="CHEBI:57783"/>
        <dbReference type="ChEBI" id="CHEBI:58349"/>
        <dbReference type="EC" id="1.1.1.25"/>
    </reaction>
</comment>
<comment type="pathway">
    <text evidence="1">Metabolic intermediate biosynthesis; chorismate biosynthesis; chorismate from D-erythrose 4-phosphate and phosphoenolpyruvate: step 4/7.</text>
</comment>
<comment type="subunit">
    <text evidence="1">Homodimer.</text>
</comment>
<comment type="similarity">
    <text evidence="1">Belongs to the shikimate dehydrogenase family.</text>
</comment>
<proteinExistence type="inferred from homology"/>
<feature type="chain" id="PRO_1000078123" description="Shikimate dehydrogenase (NADP(+))">
    <location>
        <begin position="1"/>
        <end position="286"/>
    </location>
</feature>
<feature type="active site" description="Proton acceptor" evidence="1">
    <location>
        <position position="72"/>
    </location>
</feature>
<feature type="binding site" evidence="1">
    <location>
        <begin position="21"/>
        <end position="23"/>
    </location>
    <ligand>
        <name>shikimate</name>
        <dbReference type="ChEBI" id="CHEBI:36208"/>
    </ligand>
</feature>
<feature type="binding site" evidence="1">
    <location>
        <position position="68"/>
    </location>
    <ligand>
        <name>shikimate</name>
        <dbReference type="ChEBI" id="CHEBI:36208"/>
    </ligand>
</feature>
<feature type="binding site" evidence="1">
    <location>
        <position position="84"/>
    </location>
    <ligand>
        <name>NADP(+)</name>
        <dbReference type="ChEBI" id="CHEBI:58349"/>
    </ligand>
</feature>
<feature type="binding site" evidence="1">
    <location>
        <position position="93"/>
    </location>
    <ligand>
        <name>shikimate</name>
        <dbReference type="ChEBI" id="CHEBI:36208"/>
    </ligand>
</feature>
<feature type="binding site" evidence="1">
    <location>
        <position position="108"/>
    </location>
    <ligand>
        <name>shikimate</name>
        <dbReference type="ChEBI" id="CHEBI:36208"/>
    </ligand>
</feature>
<feature type="binding site" evidence="1">
    <location>
        <begin position="132"/>
        <end position="136"/>
    </location>
    <ligand>
        <name>NADP(+)</name>
        <dbReference type="ChEBI" id="CHEBI:58349"/>
    </ligand>
</feature>
<feature type="binding site" evidence="1">
    <location>
        <position position="230"/>
    </location>
    <ligand>
        <name>NADP(+)</name>
        <dbReference type="ChEBI" id="CHEBI:58349"/>
    </ligand>
</feature>
<feature type="binding site" evidence="1">
    <location>
        <position position="232"/>
    </location>
    <ligand>
        <name>shikimate</name>
        <dbReference type="ChEBI" id="CHEBI:36208"/>
    </ligand>
</feature>
<feature type="binding site" evidence="1">
    <location>
        <position position="253"/>
    </location>
    <ligand>
        <name>NADP(+)</name>
        <dbReference type="ChEBI" id="CHEBI:58349"/>
    </ligand>
</feature>
<gene>
    <name evidence="1" type="primary">aroE</name>
    <name type="ordered locus">MAE_37780</name>
</gene>
<evidence type="ECO:0000255" key="1">
    <source>
        <dbReference type="HAMAP-Rule" id="MF_00222"/>
    </source>
</evidence>
<accession>B0JPM6</accession>
<name>AROE_MICAN</name>
<protein>
    <recommendedName>
        <fullName evidence="1">Shikimate dehydrogenase (NADP(+))</fullName>
        <shortName evidence="1">SDH</shortName>
        <ecNumber evidence="1">1.1.1.25</ecNumber>
    </recommendedName>
</protein>
<dbReference type="EC" id="1.1.1.25" evidence="1"/>
<dbReference type="EMBL" id="AP009552">
    <property type="protein sequence ID" value="BAG03600.1"/>
    <property type="molecule type" value="Genomic_DNA"/>
</dbReference>
<dbReference type="RefSeq" id="WP_012266573.1">
    <property type="nucleotide sequence ID" value="NC_010296.1"/>
</dbReference>
<dbReference type="SMR" id="B0JPM6"/>
<dbReference type="STRING" id="449447.MAE_37780"/>
<dbReference type="PaxDb" id="449447-MAE_37780"/>
<dbReference type="EnsemblBacteria" id="BAG03600">
    <property type="protein sequence ID" value="BAG03600"/>
    <property type="gene ID" value="MAE_37780"/>
</dbReference>
<dbReference type="KEGG" id="mar:MAE_37780"/>
<dbReference type="PATRIC" id="fig|449447.4.peg.3419"/>
<dbReference type="eggNOG" id="COG0169">
    <property type="taxonomic scope" value="Bacteria"/>
</dbReference>
<dbReference type="HOGENOM" id="CLU_044063_4_1_3"/>
<dbReference type="BioCyc" id="MAER449447:MAE_RS16330-MONOMER"/>
<dbReference type="UniPathway" id="UPA00053">
    <property type="reaction ID" value="UER00087"/>
</dbReference>
<dbReference type="Proteomes" id="UP000001510">
    <property type="component" value="Chromosome"/>
</dbReference>
<dbReference type="GO" id="GO:0005829">
    <property type="term" value="C:cytosol"/>
    <property type="evidence" value="ECO:0007669"/>
    <property type="project" value="TreeGrafter"/>
</dbReference>
<dbReference type="GO" id="GO:0050661">
    <property type="term" value="F:NADP binding"/>
    <property type="evidence" value="ECO:0007669"/>
    <property type="project" value="InterPro"/>
</dbReference>
<dbReference type="GO" id="GO:0004764">
    <property type="term" value="F:shikimate 3-dehydrogenase (NADP+) activity"/>
    <property type="evidence" value="ECO:0007669"/>
    <property type="project" value="UniProtKB-UniRule"/>
</dbReference>
<dbReference type="GO" id="GO:0008652">
    <property type="term" value="P:amino acid biosynthetic process"/>
    <property type="evidence" value="ECO:0007669"/>
    <property type="project" value="UniProtKB-KW"/>
</dbReference>
<dbReference type="GO" id="GO:0009073">
    <property type="term" value="P:aromatic amino acid family biosynthetic process"/>
    <property type="evidence" value="ECO:0007669"/>
    <property type="project" value="UniProtKB-KW"/>
</dbReference>
<dbReference type="GO" id="GO:0009423">
    <property type="term" value="P:chorismate biosynthetic process"/>
    <property type="evidence" value="ECO:0007669"/>
    <property type="project" value="UniProtKB-UniRule"/>
</dbReference>
<dbReference type="GO" id="GO:0019632">
    <property type="term" value="P:shikimate metabolic process"/>
    <property type="evidence" value="ECO:0007669"/>
    <property type="project" value="InterPro"/>
</dbReference>
<dbReference type="CDD" id="cd01065">
    <property type="entry name" value="NAD_bind_Shikimate_DH"/>
    <property type="match status" value="1"/>
</dbReference>
<dbReference type="Gene3D" id="3.40.50.10860">
    <property type="entry name" value="Leucine Dehydrogenase, chain A, domain 1"/>
    <property type="match status" value="1"/>
</dbReference>
<dbReference type="Gene3D" id="3.40.50.720">
    <property type="entry name" value="NAD(P)-binding Rossmann-like Domain"/>
    <property type="match status" value="1"/>
</dbReference>
<dbReference type="HAMAP" id="MF_00222">
    <property type="entry name" value="Shikimate_DH_AroE"/>
    <property type="match status" value="1"/>
</dbReference>
<dbReference type="InterPro" id="IPR046346">
    <property type="entry name" value="Aminoacid_DH-like_N_sf"/>
</dbReference>
<dbReference type="InterPro" id="IPR036291">
    <property type="entry name" value="NAD(P)-bd_dom_sf"/>
</dbReference>
<dbReference type="InterPro" id="IPR041121">
    <property type="entry name" value="SDH_C"/>
</dbReference>
<dbReference type="InterPro" id="IPR011342">
    <property type="entry name" value="Shikimate_DH"/>
</dbReference>
<dbReference type="InterPro" id="IPR013708">
    <property type="entry name" value="Shikimate_DH-bd_N"/>
</dbReference>
<dbReference type="InterPro" id="IPR022893">
    <property type="entry name" value="Shikimate_DH_fam"/>
</dbReference>
<dbReference type="NCBIfam" id="TIGR00507">
    <property type="entry name" value="aroE"/>
    <property type="match status" value="1"/>
</dbReference>
<dbReference type="NCBIfam" id="NF001314">
    <property type="entry name" value="PRK00258.2-2"/>
    <property type="match status" value="1"/>
</dbReference>
<dbReference type="PANTHER" id="PTHR21089:SF1">
    <property type="entry name" value="BIFUNCTIONAL 3-DEHYDROQUINATE DEHYDRATASE_SHIKIMATE DEHYDROGENASE, CHLOROPLASTIC"/>
    <property type="match status" value="1"/>
</dbReference>
<dbReference type="PANTHER" id="PTHR21089">
    <property type="entry name" value="SHIKIMATE DEHYDROGENASE"/>
    <property type="match status" value="1"/>
</dbReference>
<dbReference type="Pfam" id="PF18317">
    <property type="entry name" value="SDH_C"/>
    <property type="match status" value="1"/>
</dbReference>
<dbReference type="Pfam" id="PF08501">
    <property type="entry name" value="Shikimate_dh_N"/>
    <property type="match status" value="1"/>
</dbReference>
<dbReference type="SUPFAM" id="SSF53223">
    <property type="entry name" value="Aminoacid dehydrogenase-like, N-terminal domain"/>
    <property type="match status" value="1"/>
</dbReference>
<dbReference type="SUPFAM" id="SSF51735">
    <property type="entry name" value="NAD(P)-binding Rossmann-fold domains"/>
    <property type="match status" value="1"/>
</dbReference>
<reference key="1">
    <citation type="journal article" date="2007" name="DNA Res.">
        <title>Complete genomic structure of the bloom-forming toxic cyanobacterium Microcystis aeruginosa NIES-843.</title>
        <authorList>
            <person name="Kaneko T."/>
            <person name="Nakajima N."/>
            <person name="Okamoto S."/>
            <person name="Suzuki I."/>
            <person name="Tanabe Y."/>
            <person name="Tamaoki M."/>
            <person name="Nakamura Y."/>
            <person name="Kasai F."/>
            <person name="Watanabe A."/>
            <person name="Kawashima K."/>
            <person name="Kishida Y."/>
            <person name="Ono A."/>
            <person name="Shimizu Y."/>
            <person name="Takahashi C."/>
            <person name="Minami C."/>
            <person name="Fujishiro T."/>
            <person name="Kohara M."/>
            <person name="Katoh M."/>
            <person name="Nakazaki N."/>
            <person name="Nakayama S."/>
            <person name="Yamada M."/>
            <person name="Tabata S."/>
            <person name="Watanabe M.M."/>
        </authorList>
    </citation>
    <scope>NUCLEOTIDE SEQUENCE [LARGE SCALE GENOMIC DNA]</scope>
    <source>
        <strain>NIES-843 / IAM M-247</strain>
    </source>
</reference>
<sequence>MTIINGKTKLLGVIGDPIGHTLSPPMHNAAIDALGLNYVYLPLPIAPENLETAIAGLSAIDLEGFSVTIPHKLAIIPLLSQITEKARLVGAVNTVWRTETGWQGTNTDVDGFLAPLKSLDKDWSQVNPVILGNGGAARAVVVACAQLGCGEIHVVGRNQKKLDPFKESWANTSLYDLLEVHSWDELEGLVSTTELLINSTPIGMSPQGEQSPVELELLDLLPPSAIAYDLIYNPRPTKFLRLARTRGIRIIDGLEMLVNQGAIALEIWLGQPVPVSVMREALLKQF</sequence>
<organism>
    <name type="scientific">Microcystis aeruginosa (strain NIES-843 / IAM M-2473)</name>
    <dbReference type="NCBI Taxonomy" id="449447"/>
    <lineage>
        <taxon>Bacteria</taxon>
        <taxon>Bacillati</taxon>
        <taxon>Cyanobacteriota</taxon>
        <taxon>Cyanophyceae</taxon>
        <taxon>Oscillatoriophycideae</taxon>
        <taxon>Chroococcales</taxon>
        <taxon>Microcystaceae</taxon>
        <taxon>Microcystis</taxon>
    </lineage>
</organism>